<sequence>MTKPIVAIVGRPNVGKSTIFNRIVGERVSIVEDTPGVTRDRIYSSGEWLTHDFNIIDTGGIEIGDAPFQTQIRAQAEIAIDEADVIIFMVNVREGLTQSDEMVAQILYKSKKPVVLAVNKVDNMEMRTDVYDFYSLGFGEPYPISGSHGLGLGDLLDAVVSHFGEEEEDPYDEDTIRLSIIGRPNVGKSSLVNAILGEDRVIVSNVAGTTRDAIDTEYSYDGQDYVLIDTAGMRKKGKVYESTEKYSVLRALKAIERSNVVLVVIDAEQGIIEQDKRVAGYAHEQGKAVVIVVNKWDTVEKDSKTMKKFEDEVRKEFQFLDYAQIAFVSAKERTRLRTLFPYINEASENHKKRVQSSTLNEVVTDAISMNPTPTDKGRRLNVFYATQVAIEPPTFVVFVNDVELMHFSYKRYLENQIRAAFGFEGTPIHIIARKRN</sequence>
<dbReference type="EMBL" id="AP009324">
    <property type="protein sequence ID" value="BAF78346.1"/>
    <property type="molecule type" value="Genomic_DNA"/>
</dbReference>
<dbReference type="RefSeq" id="WP_000165530.1">
    <property type="nucleotide sequence ID" value="NZ_CTYB01000006.1"/>
</dbReference>
<dbReference type="SMR" id="A7X2I1"/>
<dbReference type="KEGG" id="saw:SAHV_1463"/>
<dbReference type="HOGENOM" id="CLU_016077_6_2_9"/>
<dbReference type="GO" id="GO:0005525">
    <property type="term" value="F:GTP binding"/>
    <property type="evidence" value="ECO:0007669"/>
    <property type="project" value="UniProtKB-UniRule"/>
</dbReference>
<dbReference type="GO" id="GO:0043022">
    <property type="term" value="F:ribosome binding"/>
    <property type="evidence" value="ECO:0007669"/>
    <property type="project" value="TreeGrafter"/>
</dbReference>
<dbReference type="GO" id="GO:0042254">
    <property type="term" value="P:ribosome biogenesis"/>
    <property type="evidence" value="ECO:0007669"/>
    <property type="project" value="UniProtKB-KW"/>
</dbReference>
<dbReference type="CDD" id="cd01894">
    <property type="entry name" value="EngA1"/>
    <property type="match status" value="1"/>
</dbReference>
<dbReference type="CDD" id="cd01895">
    <property type="entry name" value="EngA2"/>
    <property type="match status" value="1"/>
</dbReference>
<dbReference type="FunFam" id="3.30.300.20:FF:000004">
    <property type="entry name" value="GTPase Der"/>
    <property type="match status" value="1"/>
</dbReference>
<dbReference type="FunFam" id="3.40.50.300:FF:000040">
    <property type="entry name" value="GTPase Der"/>
    <property type="match status" value="1"/>
</dbReference>
<dbReference type="FunFam" id="3.40.50.300:FF:000057">
    <property type="entry name" value="GTPase Der"/>
    <property type="match status" value="1"/>
</dbReference>
<dbReference type="Gene3D" id="3.30.300.20">
    <property type="match status" value="1"/>
</dbReference>
<dbReference type="Gene3D" id="3.40.50.300">
    <property type="entry name" value="P-loop containing nucleotide triphosphate hydrolases"/>
    <property type="match status" value="2"/>
</dbReference>
<dbReference type="HAMAP" id="MF_00195">
    <property type="entry name" value="GTPase_Der"/>
    <property type="match status" value="1"/>
</dbReference>
<dbReference type="InterPro" id="IPR031166">
    <property type="entry name" value="G_ENGA"/>
</dbReference>
<dbReference type="InterPro" id="IPR006073">
    <property type="entry name" value="GTP-bd"/>
</dbReference>
<dbReference type="InterPro" id="IPR016484">
    <property type="entry name" value="GTPase_Der"/>
</dbReference>
<dbReference type="InterPro" id="IPR032859">
    <property type="entry name" value="KH_dom-like"/>
</dbReference>
<dbReference type="InterPro" id="IPR015946">
    <property type="entry name" value="KH_dom-like_a/b"/>
</dbReference>
<dbReference type="InterPro" id="IPR027417">
    <property type="entry name" value="P-loop_NTPase"/>
</dbReference>
<dbReference type="InterPro" id="IPR005225">
    <property type="entry name" value="Small_GTP-bd"/>
</dbReference>
<dbReference type="NCBIfam" id="TIGR03594">
    <property type="entry name" value="GTPase_EngA"/>
    <property type="match status" value="1"/>
</dbReference>
<dbReference type="NCBIfam" id="TIGR00231">
    <property type="entry name" value="small_GTP"/>
    <property type="match status" value="2"/>
</dbReference>
<dbReference type="PANTHER" id="PTHR43834">
    <property type="entry name" value="GTPASE DER"/>
    <property type="match status" value="1"/>
</dbReference>
<dbReference type="PANTHER" id="PTHR43834:SF6">
    <property type="entry name" value="GTPASE DER"/>
    <property type="match status" value="1"/>
</dbReference>
<dbReference type="Pfam" id="PF14714">
    <property type="entry name" value="KH_dom-like"/>
    <property type="match status" value="1"/>
</dbReference>
<dbReference type="Pfam" id="PF01926">
    <property type="entry name" value="MMR_HSR1"/>
    <property type="match status" value="2"/>
</dbReference>
<dbReference type="PIRSF" id="PIRSF006485">
    <property type="entry name" value="GTP-binding_EngA"/>
    <property type="match status" value="1"/>
</dbReference>
<dbReference type="PRINTS" id="PR00326">
    <property type="entry name" value="GTP1OBG"/>
</dbReference>
<dbReference type="SUPFAM" id="SSF52540">
    <property type="entry name" value="P-loop containing nucleoside triphosphate hydrolases"/>
    <property type="match status" value="2"/>
</dbReference>
<dbReference type="PROSITE" id="PS51712">
    <property type="entry name" value="G_ENGA"/>
    <property type="match status" value="2"/>
</dbReference>
<name>DER_STAA1</name>
<reference key="1">
    <citation type="journal article" date="2008" name="Antimicrob. Agents Chemother.">
        <title>Mutated response regulator graR is responsible for phenotypic conversion of Staphylococcus aureus from heterogeneous vancomycin-intermediate resistance to vancomycin-intermediate resistance.</title>
        <authorList>
            <person name="Neoh H.-M."/>
            <person name="Cui L."/>
            <person name="Yuzawa H."/>
            <person name="Takeuchi F."/>
            <person name="Matsuo M."/>
            <person name="Hiramatsu K."/>
        </authorList>
    </citation>
    <scope>NUCLEOTIDE SEQUENCE [LARGE SCALE GENOMIC DNA]</scope>
    <source>
        <strain>Mu3 / ATCC 700698</strain>
    </source>
</reference>
<protein>
    <recommendedName>
        <fullName evidence="1">GTPase Der</fullName>
    </recommendedName>
    <alternativeName>
        <fullName evidence="1">GTP-binding protein EngA</fullName>
    </alternativeName>
</protein>
<organism>
    <name type="scientific">Staphylococcus aureus (strain Mu3 / ATCC 700698)</name>
    <dbReference type="NCBI Taxonomy" id="418127"/>
    <lineage>
        <taxon>Bacteria</taxon>
        <taxon>Bacillati</taxon>
        <taxon>Bacillota</taxon>
        <taxon>Bacilli</taxon>
        <taxon>Bacillales</taxon>
        <taxon>Staphylococcaceae</taxon>
        <taxon>Staphylococcus</taxon>
    </lineage>
</organism>
<comment type="function">
    <text evidence="1">GTPase that plays an essential role in the late steps of ribosome biogenesis.</text>
</comment>
<comment type="subunit">
    <text evidence="1">Associates with the 50S ribosomal subunit.</text>
</comment>
<comment type="similarity">
    <text evidence="1">Belongs to the TRAFAC class TrmE-Era-EngA-EngB-Septin-like GTPase superfamily. EngA (Der) GTPase family.</text>
</comment>
<gene>
    <name evidence="1" type="primary">der</name>
    <name type="synonym">engA</name>
    <name type="ordered locus">SAHV_1463</name>
</gene>
<evidence type="ECO:0000255" key="1">
    <source>
        <dbReference type="HAMAP-Rule" id="MF_00195"/>
    </source>
</evidence>
<proteinExistence type="inferred from homology"/>
<accession>A7X2I1</accession>
<feature type="chain" id="PRO_1000011746" description="GTPase Der">
    <location>
        <begin position="1"/>
        <end position="436"/>
    </location>
</feature>
<feature type="domain" description="EngA-type G 1">
    <location>
        <begin position="4"/>
        <end position="167"/>
    </location>
</feature>
<feature type="domain" description="EngA-type G 2">
    <location>
        <begin position="176"/>
        <end position="351"/>
    </location>
</feature>
<feature type="domain" description="KH-like" evidence="1">
    <location>
        <begin position="352"/>
        <end position="436"/>
    </location>
</feature>
<feature type="binding site" evidence="1">
    <location>
        <begin position="10"/>
        <end position="17"/>
    </location>
    <ligand>
        <name>GTP</name>
        <dbReference type="ChEBI" id="CHEBI:37565"/>
        <label>1</label>
    </ligand>
</feature>
<feature type="binding site" evidence="1">
    <location>
        <begin position="57"/>
        <end position="61"/>
    </location>
    <ligand>
        <name>GTP</name>
        <dbReference type="ChEBI" id="CHEBI:37565"/>
        <label>1</label>
    </ligand>
</feature>
<feature type="binding site" evidence="1">
    <location>
        <begin position="119"/>
        <end position="122"/>
    </location>
    <ligand>
        <name>GTP</name>
        <dbReference type="ChEBI" id="CHEBI:37565"/>
        <label>1</label>
    </ligand>
</feature>
<feature type="binding site" evidence="1">
    <location>
        <begin position="182"/>
        <end position="189"/>
    </location>
    <ligand>
        <name>GTP</name>
        <dbReference type="ChEBI" id="CHEBI:37565"/>
        <label>2</label>
    </ligand>
</feature>
<feature type="binding site" evidence="1">
    <location>
        <begin position="229"/>
        <end position="233"/>
    </location>
    <ligand>
        <name>GTP</name>
        <dbReference type="ChEBI" id="CHEBI:37565"/>
        <label>2</label>
    </ligand>
</feature>
<feature type="binding site" evidence="1">
    <location>
        <begin position="294"/>
        <end position="297"/>
    </location>
    <ligand>
        <name>GTP</name>
        <dbReference type="ChEBI" id="CHEBI:37565"/>
        <label>2</label>
    </ligand>
</feature>
<keyword id="KW-0342">GTP-binding</keyword>
<keyword id="KW-0547">Nucleotide-binding</keyword>
<keyword id="KW-0677">Repeat</keyword>
<keyword id="KW-0690">Ribosome biogenesis</keyword>